<accession>P62625</accession>
<accession>P22565</accession>
<comment type="function">
    <text evidence="1">Catalyzes the conversion of 1-hydroxy-2-methyl-2-(E)-butenyl 4-diphosphate (HMBPP) into a mixture of isopentenyl diphosphate (IPP) and dimethylallyl diphosphate (DMAPP). Acts in the terminal step of the DOXP/MEP pathway for isoprenoid precursor biosynthesis.</text>
</comment>
<comment type="catalytic activity">
    <reaction evidence="1">
        <text>isopentenyl diphosphate + 2 oxidized [2Fe-2S]-[ferredoxin] + H2O = (2E)-4-hydroxy-3-methylbut-2-enyl diphosphate + 2 reduced [2Fe-2S]-[ferredoxin] + 2 H(+)</text>
        <dbReference type="Rhea" id="RHEA:24488"/>
        <dbReference type="Rhea" id="RHEA-COMP:10000"/>
        <dbReference type="Rhea" id="RHEA-COMP:10001"/>
        <dbReference type="ChEBI" id="CHEBI:15377"/>
        <dbReference type="ChEBI" id="CHEBI:15378"/>
        <dbReference type="ChEBI" id="CHEBI:33737"/>
        <dbReference type="ChEBI" id="CHEBI:33738"/>
        <dbReference type="ChEBI" id="CHEBI:128753"/>
        <dbReference type="ChEBI" id="CHEBI:128769"/>
        <dbReference type="EC" id="1.17.7.4"/>
    </reaction>
</comment>
<comment type="catalytic activity">
    <reaction evidence="1">
        <text>dimethylallyl diphosphate + 2 oxidized [2Fe-2S]-[ferredoxin] + H2O = (2E)-4-hydroxy-3-methylbut-2-enyl diphosphate + 2 reduced [2Fe-2S]-[ferredoxin] + 2 H(+)</text>
        <dbReference type="Rhea" id="RHEA:24825"/>
        <dbReference type="Rhea" id="RHEA-COMP:10000"/>
        <dbReference type="Rhea" id="RHEA-COMP:10001"/>
        <dbReference type="ChEBI" id="CHEBI:15377"/>
        <dbReference type="ChEBI" id="CHEBI:15378"/>
        <dbReference type="ChEBI" id="CHEBI:33737"/>
        <dbReference type="ChEBI" id="CHEBI:33738"/>
        <dbReference type="ChEBI" id="CHEBI:57623"/>
        <dbReference type="ChEBI" id="CHEBI:128753"/>
        <dbReference type="EC" id="1.17.7.4"/>
    </reaction>
</comment>
<comment type="cofactor">
    <cofactor evidence="1">
        <name>[4Fe-4S] cluster</name>
        <dbReference type="ChEBI" id="CHEBI:49883"/>
    </cofactor>
    <text evidence="1">Binds 1 [4Fe-4S] cluster per subunit.</text>
</comment>
<comment type="pathway">
    <text evidence="1">Isoprenoid biosynthesis; dimethylallyl diphosphate biosynthesis; dimethylallyl diphosphate from (2E)-4-hydroxy-3-methylbutenyl diphosphate: step 1/1.</text>
</comment>
<comment type="pathway">
    <text evidence="1">Isoprenoid biosynthesis; isopentenyl diphosphate biosynthesis via DXP pathway; isopentenyl diphosphate from 1-deoxy-D-xylulose 5-phosphate: step 6/6.</text>
</comment>
<comment type="subunit">
    <text evidence="1">Homodimer.</text>
</comment>
<comment type="similarity">
    <text evidence="1">Belongs to the IspH family.</text>
</comment>
<proteinExistence type="inferred from homology"/>
<dbReference type="EC" id="1.17.7.4" evidence="1"/>
<dbReference type="EMBL" id="AE005174">
    <property type="protein sequence ID" value="AAG54331.1"/>
    <property type="molecule type" value="Genomic_DNA"/>
</dbReference>
<dbReference type="EMBL" id="BA000007">
    <property type="protein sequence ID" value="BAB33455.1"/>
    <property type="molecule type" value="Genomic_DNA"/>
</dbReference>
<dbReference type="PIR" id="G85483">
    <property type="entry name" value="G85483"/>
</dbReference>
<dbReference type="PIR" id="H90632">
    <property type="entry name" value="H90632"/>
</dbReference>
<dbReference type="RefSeq" id="NP_308059.1">
    <property type="nucleotide sequence ID" value="NC_002695.1"/>
</dbReference>
<dbReference type="RefSeq" id="WP_001166395.1">
    <property type="nucleotide sequence ID" value="NZ_VOAI01000002.1"/>
</dbReference>
<dbReference type="SMR" id="P62625"/>
<dbReference type="STRING" id="155864.Z0034"/>
<dbReference type="GeneID" id="913428"/>
<dbReference type="GeneID" id="93777407"/>
<dbReference type="KEGG" id="ece:Z0034"/>
<dbReference type="KEGG" id="ecs:ECs_0032"/>
<dbReference type="PATRIC" id="fig|386585.9.peg.127"/>
<dbReference type="eggNOG" id="COG0761">
    <property type="taxonomic scope" value="Bacteria"/>
</dbReference>
<dbReference type="HOGENOM" id="CLU_027486_1_0_6"/>
<dbReference type="OMA" id="SEMIHNP"/>
<dbReference type="UniPathway" id="UPA00056">
    <property type="reaction ID" value="UER00097"/>
</dbReference>
<dbReference type="UniPathway" id="UPA00059">
    <property type="reaction ID" value="UER00105"/>
</dbReference>
<dbReference type="Proteomes" id="UP000000558">
    <property type="component" value="Chromosome"/>
</dbReference>
<dbReference type="Proteomes" id="UP000002519">
    <property type="component" value="Chromosome"/>
</dbReference>
<dbReference type="GO" id="GO:0051539">
    <property type="term" value="F:4 iron, 4 sulfur cluster binding"/>
    <property type="evidence" value="ECO:0007669"/>
    <property type="project" value="UniProtKB-UniRule"/>
</dbReference>
<dbReference type="GO" id="GO:0051745">
    <property type="term" value="F:4-hydroxy-3-methylbut-2-enyl diphosphate reductase activity"/>
    <property type="evidence" value="ECO:0007669"/>
    <property type="project" value="UniProtKB-UniRule"/>
</dbReference>
<dbReference type="GO" id="GO:0046872">
    <property type="term" value="F:metal ion binding"/>
    <property type="evidence" value="ECO:0007669"/>
    <property type="project" value="UniProtKB-KW"/>
</dbReference>
<dbReference type="GO" id="GO:0050992">
    <property type="term" value="P:dimethylallyl diphosphate biosynthetic process"/>
    <property type="evidence" value="ECO:0007669"/>
    <property type="project" value="UniProtKB-UniRule"/>
</dbReference>
<dbReference type="GO" id="GO:0019288">
    <property type="term" value="P:isopentenyl diphosphate biosynthetic process, methylerythritol 4-phosphate pathway"/>
    <property type="evidence" value="ECO:0007669"/>
    <property type="project" value="UniProtKB-UniRule"/>
</dbReference>
<dbReference type="GO" id="GO:0016114">
    <property type="term" value="P:terpenoid biosynthetic process"/>
    <property type="evidence" value="ECO:0007669"/>
    <property type="project" value="UniProtKB-UniRule"/>
</dbReference>
<dbReference type="CDD" id="cd13944">
    <property type="entry name" value="lytB_ispH"/>
    <property type="match status" value="1"/>
</dbReference>
<dbReference type="FunFam" id="3.40.1010.20:FF:000001">
    <property type="entry name" value="4-hydroxy-3-methylbut-2-enyl diphosphate reductase"/>
    <property type="match status" value="1"/>
</dbReference>
<dbReference type="FunFam" id="3.40.50.11270:FF:000001">
    <property type="entry name" value="4-hydroxy-3-methylbut-2-enyl diphosphate reductase"/>
    <property type="match status" value="1"/>
</dbReference>
<dbReference type="Gene3D" id="3.40.50.11270">
    <property type="match status" value="1"/>
</dbReference>
<dbReference type="Gene3D" id="3.40.1010.20">
    <property type="entry name" value="4-hydroxy-3-methylbut-2-enyl diphosphate reductase, catalytic domain"/>
    <property type="match status" value="2"/>
</dbReference>
<dbReference type="HAMAP" id="MF_00191">
    <property type="entry name" value="IspH"/>
    <property type="match status" value="1"/>
</dbReference>
<dbReference type="InterPro" id="IPR003451">
    <property type="entry name" value="LytB/IspH"/>
</dbReference>
<dbReference type="NCBIfam" id="TIGR00216">
    <property type="entry name" value="ispH_lytB"/>
    <property type="match status" value="1"/>
</dbReference>
<dbReference type="NCBIfam" id="NF002188">
    <property type="entry name" value="PRK01045.1-2"/>
    <property type="match status" value="1"/>
</dbReference>
<dbReference type="NCBIfam" id="NF002190">
    <property type="entry name" value="PRK01045.1-4"/>
    <property type="match status" value="1"/>
</dbReference>
<dbReference type="PANTHER" id="PTHR30426">
    <property type="entry name" value="4-HYDROXY-3-METHYLBUT-2-ENYL DIPHOSPHATE REDUCTASE"/>
    <property type="match status" value="1"/>
</dbReference>
<dbReference type="PANTHER" id="PTHR30426:SF0">
    <property type="entry name" value="4-HYDROXY-3-METHYLBUT-2-ENYL DIPHOSPHATE REDUCTASE"/>
    <property type="match status" value="1"/>
</dbReference>
<dbReference type="Pfam" id="PF02401">
    <property type="entry name" value="LYTB"/>
    <property type="match status" value="1"/>
</dbReference>
<reference key="1">
    <citation type="journal article" date="2001" name="Nature">
        <title>Genome sequence of enterohaemorrhagic Escherichia coli O157:H7.</title>
        <authorList>
            <person name="Perna N.T."/>
            <person name="Plunkett G. III"/>
            <person name="Burland V."/>
            <person name="Mau B."/>
            <person name="Glasner J.D."/>
            <person name="Rose D.J."/>
            <person name="Mayhew G.F."/>
            <person name="Evans P.S."/>
            <person name="Gregor J."/>
            <person name="Kirkpatrick H.A."/>
            <person name="Posfai G."/>
            <person name="Hackett J."/>
            <person name="Klink S."/>
            <person name="Boutin A."/>
            <person name="Shao Y."/>
            <person name="Miller L."/>
            <person name="Grotbeck E.J."/>
            <person name="Davis N.W."/>
            <person name="Lim A."/>
            <person name="Dimalanta E.T."/>
            <person name="Potamousis K."/>
            <person name="Apodaca J."/>
            <person name="Anantharaman T.S."/>
            <person name="Lin J."/>
            <person name="Yen G."/>
            <person name="Schwartz D.C."/>
            <person name="Welch R.A."/>
            <person name="Blattner F.R."/>
        </authorList>
    </citation>
    <scope>NUCLEOTIDE SEQUENCE [LARGE SCALE GENOMIC DNA]</scope>
    <source>
        <strain>O157:H7 / EDL933 / ATCC 700927 / EHEC</strain>
    </source>
</reference>
<reference key="2">
    <citation type="journal article" date="2001" name="DNA Res.">
        <title>Complete genome sequence of enterohemorrhagic Escherichia coli O157:H7 and genomic comparison with a laboratory strain K-12.</title>
        <authorList>
            <person name="Hayashi T."/>
            <person name="Makino K."/>
            <person name="Ohnishi M."/>
            <person name="Kurokawa K."/>
            <person name="Ishii K."/>
            <person name="Yokoyama K."/>
            <person name="Han C.-G."/>
            <person name="Ohtsubo E."/>
            <person name="Nakayama K."/>
            <person name="Murata T."/>
            <person name="Tanaka M."/>
            <person name="Tobe T."/>
            <person name="Iida T."/>
            <person name="Takami H."/>
            <person name="Honda T."/>
            <person name="Sasakawa C."/>
            <person name="Ogasawara N."/>
            <person name="Yasunaga T."/>
            <person name="Kuhara S."/>
            <person name="Shiba T."/>
            <person name="Hattori M."/>
            <person name="Shinagawa H."/>
        </authorList>
    </citation>
    <scope>NUCLEOTIDE SEQUENCE [LARGE SCALE GENOMIC DNA]</scope>
    <source>
        <strain>O157:H7 / Sakai / RIMD 0509952 / EHEC</strain>
    </source>
</reference>
<feature type="chain" id="PRO_0000128814" description="4-hydroxy-3-methylbut-2-enyl diphosphate reductase">
    <location>
        <begin position="1"/>
        <end position="316"/>
    </location>
</feature>
<feature type="active site" description="Proton donor" evidence="1">
    <location>
        <position position="126"/>
    </location>
</feature>
<feature type="binding site" evidence="1">
    <location>
        <position position="12"/>
    </location>
    <ligand>
        <name>[4Fe-4S] cluster</name>
        <dbReference type="ChEBI" id="CHEBI:49883"/>
    </ligand>
</feature>
<feature type="binding site" evidence="1">
    <location>
        <position position="41"/>
    </location>
    <ligand>
        <name>(2E)-4-hydroxy-3-methylbut-2-enyl diphosphate</name>
        <dbReference type="ChEBI" id="CHEBI:128753"/>
    </ligand>
</feature>
<feature type="binding site" evidence="1">
    <location>
        <position position="41"/>
    </location>
    <ligand>
        <name>dimethylallyl diphosphate</name>
        <dbReference type="ChEBI" id="CHEBI:57623"/>
    </ligand>
</feature>
<feature type="binding site" evidence="1">
    <location>
        <position position="41"/>
    </location>
    <ligand>
        <name>isopentenyl diphosphate</name>
        <dbReference type="ChEBI" id="CHEBI:128769"/>
    </ligand>
</feature>
<feature type="binding site" evidence="1">
    <location>
        <position position="74"/>
    </location>
    <ligand>
        <name>(2E)-4-hydroxy-3-methylbut-2-enyl diphosphate</name>
        <dbReference type="ChEBI" id="CHEBI:128753"/>
    </ligand>
</feature>
<feature type="binding site" evidence="1">
    <location>
        <position position="74"/>
    </location>
    <ligand>
        <name>dimethylallyl diphosphate</name>
        <dbReference type="ChEBI" id="CHEBI:57623"/>
    </ligand>
</feature>
<feature type="binding site" evidence="1">
    <location>
        <position position="74"/>
    </location>
    <ligand>
        <name>isopentenyl diphosphate</name>
        <dbReference type="ChEBI" id="CHEBI:128769"/>
    </ligand>
</feature>
<feature type="binding site" evidence="1">
    <location>
        <position position="96"/>
    </location>
    <ligand>
        <name>[4Fe-4S] cluster</name>
        <dbReference type="ChEBI" id="CHEBI:49883"/>
    </ligand>
</feature>
<feature type="binding site" evidence="1">
    <location>
        <position position="124"/>
    </location>
    <ligand>
        <name>(2E)-4-hydroxy-3-methylbut-2-enyl diphosphate</name>
        <dbReference type="ChEBI" id="CHEBI:128753"/>
    </ligand>
</feature>
<feature type="binding site" evidence="1">
    <location>
        <position position="124"/>
    </location>
    <ligand>
        <name>dimethylallyl diphosphate</name>
        <dbReference type="ChEBI" id="CHEBI:57623"/>
    </ligand>
</feature>
<feature type="binding site" evidence="1">
    <location>
        <position position="124"/>
    </location>
    <ligand>
        <name>isopentenyl diphosphate</name>
        <dbReference type="ChEBI" id="CHEBI:128769"/>
    </ligand>
</feature>
<feature type="binding site" evidence="1">
    <location>
        <position position="167"/>
    </location>
    <ligand>
        <name>(2E)-4-hydroxy-3-methylbut-2-enyl diphosphate</name>
        <dbReference type="ChEBI" id="CHEBI:128753"/>
    </ligand>
</feature>
<feature type="binding site" evidence="1">
    <location>
        <position position="197"/>
    </location>
    <ligand>
        <name>[4Fe-4S] cluster</name>
        <dbReference type="ChEBI" id="CHEBI:49883"/>
    </ligand>
</feature>
<feature type="binding site" evidence="1">
    <location>
        <position position="225"/>
    </location>
    <ligand>
        <name>(2E)-4-hydroxy-3-methylbut-2-enyl diphosphate</name>
        <dbReference type="ChEBI" id="CHEBI:128753"/>
    </ligand>
</feature>
<feature type="binding site" evidence="1">
    <location>
        <position position="225"/>
    </location>
    <ligand>
        <name>dimethylallyl diphosphate</name>
        <dbReference type="ChEBI" id="CHEBI:57623"/>
    </ligand>
</feature>
<feature type="binding site" evidence="1">
    <location>
        <position position="225"/>
    </location>
    <ligand>
        <name>isopentenyl diphosphate</name>
        <dbReference type="ChEBI" id="CHEBI:128769"/>
    </ligand>
</feature>
<feature type="binding site" evidence="1">
    <location>
        <position position="226"/>
    </location>
    <ligand>
        <name>(2E)-4-hydroxy-3-methylbut-2-enyl diphosphate</name>
        <dbReference type="ChEBI" id="CHEBI:128753"/>
    </ligand>
</feature>
<feature type="binding site" evidence="1">
    <location>
        <position position="226"/>
    </location>
    <ligand>
        <name>dimethylallyl diphosphate</name>
        <dbReference type="ChEBI" id="CHEBI:57623"/>
    </ligand>
</feature>
<feature type="binding site" evidence="1">
    <location>
        <position position="226"/>
    </location>
    <ligand>
        <name>isopentenyl diphosphate</name>
        <dbReference type="ChEBI" id="CHEBI:128769"/>
    </ligand>
</feature>
<feature type="binding site" evidence="1">
    <location>
        <position position="227"/>
    </location>
    <ligand>
        <name>(2E)-4-hydroxy-3-methylbut-2-enyl diphosphate</name>
        <dbReference type="ChEBI" id="CHEBI:128753"/>
    </ligand>
</feature>
<feature type="binding site" evidence="1">
    <location>
        <position position="227"/>
    </location>
    <ligand>
        <name>dimethylallyl diphosphate</name>
        <dbReference type="ChEBI" id="CHEBI:57623"/>
    </ligand>
</feature>
<feature type="binding site" evidence="1">
    <location>
        <position position="227"/>
    </location>
    <ligand>
        <name>isopentenyl diphosphate</name>
        <dbReference type="ChEBI" id="CHEBI:128769"/>
    </ligand>
</feature>
<feature type="binding site" evidence="1">
    <location>
        <position position="269"/>
    </location>
    <ligand>
        <name>(2E)-4-hydroxy-3-methylbut-2-enyl diphosphate</name>
        <dbReference type="ChEBI" id="CHEBI:128753"/>
    </ligand>
</feature>
<feature type="binding site" evidence="1">
    <location>
        <position position="269"/>
    </location>
    <ligand>
        <name>dimethylallyl diphosphate</name>
        <dbReference type="ChEBI" id="CHEBI:57623"/>
    </ligand>
</feature>
<feature type="binding site" evidence="1">
    <location>
        <position position="269"/>
    </location>
    <ligand>
        <name>isopentenyl diphosphate</name>
        <dbReference type="ChEBI" id="CHEBI:128769"/>
    </ligand>
</feature>
<name>ISPH_ECO57</name>
<gene>
    <name evidence="1" type="primary">ispH</name>
    <name type="synonym">lytB</name>
    <name type="ordered locus">Z0034</name>
    <name type="ordered locus">ECs0032</name>
</gene>
<evidence type="ECO:0000255" key="1">
    <source>
        <dbReference type="HAMAP-Rule" id="MF_00191"/>
    </source>
</evidence>
<organism>
    <name type="scientific">Escherichia coli O157:H7</name>
    <dbReference type="NCBI Taxonomy" id="83334"/>
    <lineage>
        <taxon>Bacteria</taxon>
        <taxon>Pseudomonadati</taxon>
        <taxon>Pseudomonadota</taxon>
        <taxon>Gammaproteobacteria</taxon>
        <taxon>Enterobacterales</taxon>
        <taxon>Enterobacteriaceae</taxon>
        <taxon>Escherichia</taxon>
    </lineage>
</organism>
<keyword id="KW-0004">4Fe-4S</keyword>
<keyword id="KW-0408">Iron</keyword>
<keyword id="KW-0411">Iron-sulfur</keyword>
<keyword id="KW-0414">Isoprene biosynthesis</keyword>
<keyword id="KW-0479">Metal-binding</keyword>
<keyword id="KW-0560">Oxidoreductase</keyword>
<keyword id="KW-1185">Reference proteome</keyword>
<protein>
    <recommendedName>
        <fullName evidence="1">4-hydroxy-3-methylbut-2-enyl diphosphate reductase</fullName>
        <shortName evidence="1">HMBPP reductase</shortName>
        <ecNumber evidence="1">1.17.7.4</ecNumber>
    </recommendedName>
</protein>
<sequence>MQILLANPRGFCAGVDRAISIVENALAIYGAPIYVRHEVVHNRYVVDSLRERGAIFIEQISEVPDGAILIFSAHGVSQAVRNEAKSRDLTVFDATCPLVTKVHMEVARASRRGEESILIGHAGHPEVEGTMGQYSNPEGGMYLVESPDDVWKLTVKNEEKLSFMTQTTLSVDDTSDVIDALRKRFPKIVGPRKDDICYATTNRQEAVRALAEQAEVVLVVGSKNSSNSNRLAELAQRMGKRAFLIDDAKDIQEEWVKEVKCVGVTAGASAPDILVQNVVARLQQLGGGEAIPLEGREENIVFEVPKELRVDIREVD</sequence>